<accession>Q8Y0N9</accession>
<comment type="cofactor">
    <cofactor evidence="1">
        <name>FMN</name>
        <dbReference type="ChEBI" id="CHEBI:58210"/>
    </cofactor>
</comment>
<comment type="similarity">
    <text evidence="1">Belongs to the nitroreductase family. HadB/RutE subfamily.</text>
</comment>
<organism>
    <name type="scientific">Ralstonia nicotianae (strain ATCC BAA-1114 / GMI1000)</name>
    <name type="common">Ralstonia solanacearum</name>
    <dbReference type="NCBI Taxonomy" id="267608"/>
    <lineage>
        <taxon>Bacteria</taxon>
        <taxon>Pseudomonadati</taxon>
        <taxon>Pseudomonadota</taxon>
        <taxon>Betaproteobacteria</taxon>
        <taxon>Burkholderiales</taxon>
        <taxon>Burkholderiaceae</taxon>
        <taxon>Ralstonia</taxon>
        <taxon>Ralstonia solanacearum species complex</taxon>
    </lineage>
</organism>
<protein>
    <recommendedName>
        <fullName evidence="1">Putative NADH dehydrogenase/NAD(P)H nitroreductase RSc1004</fullName>
        <ecNumber evidence="1">1.-.-.-</ecNumber>
    </recommendedName>
</protein>
<dbReference type="EC" id="1.-.-.-" evidence="1"/>
<dbReference type="EMBL" id="AL646052">
    <property type="protein sequence ID" value="CAD14706.1"/>
    <property type="molecule type" value="Genomic_DNA"/>
</dbReference>
<dbReference type="RefSeq" id="WP_011000956.1">
    <property type="nucleotide sequence ID" value="NC_003295.1"/>
</dbReference>
<dbReference type="SMR" id="Q8Y0N9"/>
<dbReference type="STRING" id="267608.RSc1004"/>
<dbReference type="EnsemblBacteria" id="CAD14706">
    <property type="protein sequence ID" value="CAD14706"/>
    <property type="gene ID" value="RSc1004"/>
</dbReference>
<dbReference type="KEGG" id="rso:RSc1004"/>
<dbReference type="eggNOG" id="COG0778">
    <property type="taxonomic scope" value="Bacteria"/>
</dbReference>
<dbReference type="HOGENOM" id="CLU_084441_0_0_4"/>
<dbReference type="Proteomes" id="UP000001436">
    <property type="component" value="Chromosome"/>
</dbReference>
<dbReference type="GO" id="GO:0016491">
    <property type="term" value="F:oxidoreductase activity"/>
    <property type="evidence" value="ECO:0007669"/>
    <property type="project" value="UniProtKB-UniRule"/>
</dbReference>
<dbReference type="CDD" id="cd02148">
    <property type="entry name" value="RutE-like"/>
    <property type="match status" value="1"/>
</dbReference>
<dbReference type="Gene3D" id="3.40.109.10">
    <property type="entry name" value="NADH Oxidase"/>
    <property type="match status" value="1"/>
</dbReference>
<dbReference type="HAMAP" id="MF_01204">
    <property type="entry name" value="Oxidoreductase_RutE_HadB"/>
    <property type="match status" value="1"/>
</dbReference>
<dbReference type="InterPro" id="IPR029479">
    <property type="entry name" value="Nitroreductase"/>
</dbReference>
<dbReference type="InterPro" id="IPR000415">
    <property type="entry name" value="Nitroreductase-like"/>
</dbReference>
<dbReference type="InterPro" id="IPR050461">
    <property type="entry name" value="Nitroreductase_HadB/RutE"/>
</dbReference>
<dbReference type="InterPro" id="IPR023936">
    <property type="entry name" value="RutE-like"/>
</dbReference>
<dbReference type="NCBIfam" id="NF003768">
    <property type="entry name" value="PRK05365.1"/>
    <property type="match status" value="1"/>
</dbReference>
<dbReference type="PANTHER" id="PTHR43543">
    <property type="entry name" value="MALONIC SEMIALDEHYDE REDUCTASE RUTE-RELATED"/>
    <property type="match status" value="1"/>
</dbReference>
<dbReference type="PANTHER" id="PTHR43543:SF1">
    <property type="entry name" value="MALONIC SEMIALDEHYDE REDUCTASE RUTE-RELATED"/>
    <property type="match status" value="1"/>
</dbReference>
<dbReference type="Pfam" id="PF00881">
    <property type="entry name" value="Nitroreductase"/>
    <property type="match status" value="1"/>
</dbReference>
<dbReference type="SUPFAM" id="SSF55469">
    <property type="entry name" value="FMN-dependent nitroreductase-like"/>
    <property type="match status" value="1"/>
</dbReference>
<feature type="chain" id="PRO_0000072731" description="Putative NADH dehydrogenase/NAD(P)H nitroreductase RSc1004">
    <location>
        <begin position="1"/>
        <end position="195"/>
    </location>
</feature>
<reference key="1">
    <citation type="journal article" date="2002" name="Nature">
        <title>Genome sequence of the plant pathogen Ralstonia solanacearum.</title>
        <authorList>
            <person name="Salanoubat M."/>
            <person name="Genin S."/>
            <person name="Artiguenave F."/>
            <person name="Gouzy J."/>
            <person name="Mangenot S."/>
            <person name="Arlat M."/>
            <person name="Billault A."/>
            <person name="Brottier P."/>
            <person name="Camus J.-C."/>
            <person name="Cattolico L."/>
            <person name="Chandler M."/>
            <person name="Choisne N."/>
            <person name="Claudel-Renard C."/>
            <person name="Cunnac S."/>
            <person name="Demange N."/>
            <person name="Gaspin C."/>
            <person name="Lavie M."/>
            <person name="Moisan A."/>
            <person name="Robert C."/>
            <person name="Saurin W."/>
            <person name="Schiex T."/>
            <person name="Siguier P."/>
            <person name="Thebault P."/>
            <person name="Whalen M."/>
            <person name="Wincker P."/>
            <person name="Levy M."/>
            <person name="Weissenbach J."/>
            <person name="Boucher C.A."/>
        </authorList>
    </citation>
    <scope>NUCLEOTIDE SEQUENCE [LARGE SCALE GENOMIC DNA]</scope>
    <source>
        <strain>ATCC BAA-1114 / GMI1000</strain>
    </source>
</reference>
<gene>
    <name type="ordered locus">RSc1004</name>
    <name type="ORF">RS04288</name>
</gene>
<sequence>MPTLEPSVLDQLFHEARTHNVWLDNPVDDELLHTLYDTVKYGPTAANSTPARFVFVKSAAAKEQLVPCMSAGNQEKTRQAPVTVIVAYDTQFHEQLPKLFPHVDARSWYAGDQARINAAALMNSSLQGGYLVIAARALGLDCGPMGGFDADKVNATFFPDGQWKVNFICNLGYGDTSKVHPRNPRLTFEEACRVL</sequence>
<keyword id="KW-0285">Flavoprotein</keyword>
<keyword id="KW-0288">FMN</keyword>
<keyword id="KW-0520">NAD</keyword>
<keyword id="KW-0521">NADP</keyword>
<keyword id="KW-0560">Oxidoreductase</keyword>
<keyword id="KW-1185">Reference proteome</keyword>
<proteinExistence type="inferred from homology"/>
<name>Y1004_RALN1</name>
<evidence type="ECO:0000255" key="1">
    <source>
        <dbReference type="HAMAP-Rule" id="MF_01204"/>
    </source>
</evidence>